<sequence length="493" mass="55713">MWPQDPSRKEVLRFAVSCRILTLMLQALFNAIIPDHHAEAFSPPRLAPSGFVDQLVEGLLGGLSHWDAEHFLFIAEHGYLYEHNFAFFPGFPLALLVGTELLRPLRGLLSLRSCLLISVASLNFLFFMLAAVALHDLGCLVLHCPHQSFYAALLFCLSPANVFLAAGYSEALFALLTFSAMGQLERGRVWTSVLLFAFATGVRSNGLVSVGFLMHSQCQGFFSSLTMLNPLRQLFKLMASLFLSVFTLGLPFALFQYYAYTQFCLPGSARPIPEPLVQLAVDKGYRIAEGNEPPWCFWDVPLIYSYIQDVYWNVGFLKYYELKQVPNFLLAAPVAILVAWATWTYVTTHPWLCLTLGLQRSKNNKTLEKPDLGFLSPQVFVYVVHAAVLLLFGGLCMHVQVLTRFLGSSTPIMYWFPAHLLQDQEPLLRSLKTVPWKPLAEDSPPGQKVPRNPIMGLLYHWKTCSPVTRYILGYFLTYWLLGLLLHCNFLPWT</sequence>
<proteinExistence type="evidence at protein level"/>
<protein>
    <recommendedName>
        <fullName evidence="7">GPI alpha-1,6-mannosyltransferase 2</fullName>
        <ecNumber evidence="3">2.4.1.-</ecNumber>
    </recommendedName>
    <alternativeName>
        <fullName>GPI mannosyltransferase II</fullName>
        <shortName evidence="6">GPI-MT-II</shortName>
    </alternativeName>
    <alternativeName>
        <fullName evidence="6">Phosphatidylinositol-glycan biosynthesis class V protein</fullName>
        <shortName evidence="6">PIG-V</shortName>
    </alternativeName>
</protein>
<comment type="function">
    <text evidence="1 3 4">Alpha-1,6-mannosyltransferase that catalyzes the transfer of the second mannose, via an alpha-1,6 bond, from a dolichol-phosphate-mannose (Dol-P-Man) to the alpha-D-Man-(1-&gt;4)-alpha-D-GlcN-(1-&gt;6)-(1-radyl,2-acyl-sn-glycero-3-phospho)-2-acyl-inositol (also termed H2) intermediate to generate an alpha-D-Man-(1-&gt;6)-alpha-D-Man-(1-&gt;4)-alpha-D-GlcN-(1-&gt;6)-(1-radyl,2-acyl-sn-glycero-3-phospho)-2-acyl-inositol (also termed H3) and participates in the seventh step of the glycosylphosphatidylinositol-anchor biosynthesis (PubMed:15623507, PubMed:15720390). Also transfers the second mannose on a 2-PEtn-alpha-D-Man-(1-&gt;4)-alpha-D-GlcN-(1-&gt;6)-(1-radyl,2-acyl-sn-glycero-3-phospho)-2-acyl-inositol (also termed H5) (By similarity).</text>
</comment>
<comment type="pathway">
    <text evidence="3">Glycolipid biosynthesis; glycosylphosphatidylinositol-anchor biosynthesis.</text>
</comment>
<comment type="interaction">
    <interactant intactId="EBI-25836582">
        <id>Q9NUD9</id>
    </interactant>
    <interactant intactId="EBI-78219">
        <id>P45973</id>
        <label>CBX5</label>
    </interactant>
    <organismsDiffer>false</organismsDiffer>
    <experiments>3</experiments>
</comment>
<comment type="interaction">
    <interactant intactId="EBI-25836582">
        <id>Q9NUD9</id>
    </interactant>
    <interactant intactId="EBI-350723">
        <id>P50454</id>
        <label>SERPINH1</label>
    </interactant>
    <organismsDiffer>false</organismsDiffer>
    <experiments>3</experiments>
</comment>
<comment type="interaction">
    <interactant intactId="EBI-25836582">
        <id>Q9NUD9</id>
    </interactant>
    <interactant intactId="EBI-296151">
        <id>P37173</id>
        <label>TGFBR2</label>
    </interactant>
    <organismsDiffer>false</organismsDiffer>
    <experiments>3</experiments>
</comment>
<comment type="subcellular location">
    <subcellularLocation>
        <location evidence="3">Endoplasmic reticulum membrane</location>
        <topology evidence="3">Multi-pass membrane protein</topology>
    </subcellularLocation>
</comment>
<comment type="PTM">
    <text evidence="3">Not N-glycosylated.</text>
</comment>
<comment type="disease" evidence="5">
    <disease id="DI-02921">
        <name>Hyperphosphatasia with impaired intellectual development syndrome 1</name>
        <acronym>HPMRS1</acronym>
        <description>A severe syndrome characterized by elevated serum alkaline phosphatase, severe intellectual disability, seizures, hypotonia, facial dysmorphism, and hypoplastic terminal phalanges.</description>
        <dbReference type="MIM" id="239300"/>
    </disease>
    <text>The disease is caused by variants affecting the gene represented in this entry.</text>
</comment>
<comment type="similarity">
    <text evidence="7">Belongs to the PIGV family.</text>
</comment>
<gene>
    <name evidence="9" type="primary">PIGV</name>
</gene>
<name>PIGV_HUMAN</name>
<organism>
    <name type="scientific">Homo sapiens</name>
    <name type="common">Human</name>
    <dbReference type="NCBI Taxonomy" id="9606"/>
    <lineage>
        <taxon>Eukaryota</taxon>
        <taxon>Metazoa</taxon>
        <taxon>Chordata</taxon>
        <taxon>Craniata</taxon>
        <taxon>Vertebrata</taxon>
        <taxon>Euteleostomi</taxon>
        <taxon>Mammalia</taxon>
        <taxon>Eutheria</taxon>
        <taxon>Euarchontoglires</taxon>
        <taxon>Primates</taxon>
        <taxon>Haplorrhini</taxon>
        <taxon>Catarrhini</taxon>
        <taxon>Hominidae</taxon>
        <taxon>Homo</taxon>
    </lineage>
</organism>
<keyword id="KW-0225">Disease variant</keyword>
<keyword id="KW-0256">Endoplasmic reticulum</keyword>
<keyword id="KW-0328">Glycosyltransferase</keyword>
<keyword id="KW-0337">GPI-anchor biosynthesis</keyword>
<keyword id="KW-0991">Intellectual disability</keyword>
<keyword id="KW-0472">Membrane</keyword>
<keyword id="KW-1267">Proteomics identification</keyword>
<keyword id="KW-1185">Reference proteome</keyword>
<keyword id="KW-0808">Transferase</keyword>
<keyword id="KW-0812">Transmembrane</keyword>
<keyword id="KW-1133">Transmembrane helix</keyword>
<feature type="chain" id="PRO_0000246234" description="GPI alpha-1,6-mannosyltransferase 2">
    <location>
        <begin position="1"/>
        <end position="493"/>
    </location>
</feature>
<feature type="topological domain" description="Cytoplasmic" evidence="3">
    <location>
        <begin position="1"/>
        <end position="13"/>
    </location>
</feature>
<feature type="transmembrane region" description="Helical" evidence="2">
    <location>
        <begin position="14"/>
        <end position="34"/>
    </location>
</feature>
<feature type="topological domain" description="Lumenal" evidence="8">
    <location>
        <begin position="35"/>
        <end position="77"/>
    </location>
</feature>
<feature type="transmembrane region" description="Helical" evidence="2">
    <location>
        <begin position="78"/>
        <end position="98"/>
    </location>
</feature>
<feature type="topological domain" description="Cytoplasmic" evidence="8">
    <location>
        <begin position="99"/>
        <end position="113"/>
    </location>
</feature>
<feature type="transmembrane region" description="Helical" evidence="2">
    <location>
        <begin position="114"/>
        <end position="134"/>
    </location>
</feature>
<feature type="topological domain" description="Lumenal" evidence="8">
    <location>
        <begin position="135"/>
        <end position="136"/>
    </location>
</feature>
<feature type="transmembrane region" description="Helical" evidence="2">
    <location>
        <begin position="137"/>
        <end position="157"/>
    </location>
</feature>
<feature type="topological domain" description="Cytoplasmic" evidence="8">
    <location>
        <begin position="158"/>
        <end position="161"/>
    </location>
</feature>
<feature type="transmembrane region" description="Helical" evidence="2">
    <location>
        <begin position="162"/>
        <end position="182"/>
    </location>
</feature>
<feature type="topological domain" description="Lumenal" evidence="3">
    <location>
        <begin position="183"/>
        <end position="192"/>
    </location>
</feature>
<feature type="transmembrane region" description="Helical" evidence="2">
    <location>
        <begin position="193"/>
        <end position="213"/>
    </location>
</feature>
<feature type="topological domain" description="Cytoplasmic" evidence="8">
    <location>
        <begin position="214"/>
        <end position="234"/>
    </location>
</feature>
<feature type="transmembrane region" description="Helical" evidence="2">
    <location>
        <begin position="235"/>
        <end position="255"/>
    </location>
</feature>
<feature type="topological domain" description="Lumenal" evidence="8">
    <location>
        <begin position="256"/>
        <end position="327"/>
    </location>
</feature>
<feature type="transmembrane region" description="Helical" evidence="2">
    <location>
        <begin position="328"/>
        <end position="348"/>
    </location>
</feature>
<feature type="topological domain" description="Cytoplasmic" evidence="8">
    <location>
        <begin position="349"/>
        <end position="378"/>
    </location>
</feature>
<feature type="transmembrane region" description="Helical" evidence="2">
    <location>
        <begin position="379"/>
        <end position="399"/>
    </location>
</feature>
<feature type="topological domain" description="Lumenal" evidence="8">
    <location>
        <begin position="400"/>
        <end position="469"/>
    </location>
</feature>
<feature type="transmembrane region" description="Helical" evidence="2">
    <location>
        <begin position="470"/>
        <end position="490"/>
    </location>
</feature>
<feature type="topological domain" description="Cytoplasmic" evidence="3">
    <location>
        <begin position="491"/>
        <end position="493"/>
    </location>
</feature>
<feature type="sequence variant" id="VAR_064190" description="In HPMRS1; dbSNP:rs267606952." evidence="5">
    <original>Q</original>
    <variation>K</variation>
    <location>
        <position position="256"/>
    </location>
</feature>
<feature type="sequence variant" id="VAR_064191" description="In HPMRS1; dbSNP:rs139073416." evidence="5">
    <original>A</original>
    <variation>E</variation>
    <location>
        <position position="341"/>
    </location>
</feature>
<feature type="sequence variant" id="VAR_064192" description="In HPMRS1; dbSNP:rs139073416." evidence="5">
    <original>A</original>
    <variation>V</variation>
    <location>
        <position position="341"/>
    </location>
</feature>
<feature type="sequence variant" id="VAR_064193" description="In HPMRS1; dbSNP:rs267606951." evidence="5">
    <original>H</original>
    <variation>P</variation>
    <location>
        <position position="385"/>
    </location>
</feature>
<feature type="mutagenesis site" description="Loss of function." evidence="3">
    <original>W</original>
    <variation>L</variation>
    <location>
        <position position="66"/>
    </location>
</feature>
<feature type="mutagenesis site" description="Loss of function." evidence="3">
    <original>D</original>
    <variation>A</variation>
    <location>
        <position position="67"/>
    </location>
</feature>
<feature type="mutagenesis site" description="N-glycosylated due to the creation of an acceptor site for N-glycosylation." evidence="3">
    <original>PP</original>
    <variation>TA</variation>
    <location>
        <begin position="293"/>
        <end position="294"/>
    </location>
</feature>
<feature type="mutagenesis site" description="Induces a reduces enzyme activity." evidence="3">
    <original>Q</original>
    <variation>A</variation>
    <location>
        <position position="308"/>
    </location>
</feature>
<feature type="mutagenesis site" description="Loss of function." evidence="3">
    <original>W</original>
    <variation>L</variation>
    <location>
        <position position="312"/>
    </location>
</feature>
<feature type="sequence conflict" description="In Ref. 1; BAA91196." evidence="7" ref="1">
    <original>I</original>
    <variation>T</variation>
    <location>
        <position position="33"/>
    </location>
</feature>
<evidence type="ECO:0000250" key="1">
    <source>
        <dbReference type="UniProtKB" id="A0A8C2M425"/>
    </source>
</evidence>
<evidence type="ECO:0000255" key="2"/>
<evidence type="ECO:0000269" key="3">
    <source>
    </source>
</evidence>
<evidence type="ECO:0000269" key="4">
    <source>
    </source>
</evidence>
<evidence type="ECO:0000269" key="5">
    <source>
    </source>
</evidence>
<evidence type="ECO:0000303" key="6">
    <source>
    </source>
</evidence>
<evidence type="ECO:0000305" key="7"/>
<evidence type="ECO:0000305" key="8">
    <source>
    </source>
</evidence>
<evidence type="ECO:0000312" key="9">
    <source>
        <dbReference type="HGNC" id="HGNC:26031"/>
    </source>
</evidence>
<accession>Q9NUD9</accession>
<accession>D3DPL2</accession>
<accession>Q5JYG7</accession>
<accession>Q5JYG8</accession>
<accession>Q5JYG9</accession>
<accession>Q9NX26</accession>
<dbReference type="EC" id="2.4.1.-" evidence="3"/>
<dbReference type="EMBL" id="AK000484">
    <property type="protein sequence ID" value="BAA91196.1"/>
    <property type="molecule type" value="mRNA"/>
</dbReference>
<dbReference type="EMBL" id="AL034380">
    <property type="status" value="NOT_ANNOTATED_CDS"/>
    <property type="molecule type" value="Genomic_DNA"/>
</dbReference>
<dbReference type="EMBL" id="CH471059">
    <property type="protein sequence ID" value="EAX07790.1"/>
    <property type="molecule type" value="Genomic_DNA"/>
</dbReference>
<dbReference type="EMBL" id="CH471059">
    <property type="protein sequence ID" value="EAX07791.1"/>
    <property type="molecule type" value="Genomic_DNA"/>
</dbReference>
<dbReference type="EMBL" id="CH471059">
    <property type="protein sequence ID" value="EAX07792.1"/>
    <property type="molecule type" value="Genomic_DNA"/>
</dbReference>
<dbReference type="EMBL" id="BC013568">
    <property type="protein sequence ID" value="AAH13568.1"/>
    <property type="molecule type" value="mRNA"/>
</dbReference>
<dbReference type="CCDS" id="CCDS287.1"/>
<dbReference type="RefSeq" id="NP_001189483.1">
    <property type="nucleotide sequence ID" value="NM_001202554.2"/>
</dbReference>
<dbReference type="RefSeq" id="NP_001361407.1">
    <property type="nucleotide sequence ID" value="NM_001374478.1"/>
</dbReference>
<dbReference type="RefSeq" id="NP_001361409.1">
    <property type="nucleotide sequence ID" value="NM_001374480.1"/>
</dbReference>
<dbReference type="RefSeq" id="NP_001361410.1">
    <property type="nucleotide sequence ID" value="NM_001374481.1"/>
</dbReference>
<dbReference type="RefSeq" id="NP_001361411.1">
    <property type="nucleotide sequence ID" value="NM_001374482.1"/>
</dbReference>
<dbReference type="RefSeq" id="NP_060307.2">
    <property type="nucleotide sequence ID" value="NM_017837.3"/>
</dbReference>
<dbReference type="BioGRID" id="120782">
    <property type="interactions" value="2"/>
</dbReference>
<dbReference type="FunCoup" id="Q9NUD9">
    <property type="interactions" value="483"/>
</dbReference>
<dbReference type="IntAct" id="Q9NUD9">
    <property type="interactions" value="3"/>
</dbReference>
<dbReference type="STRING" id="9606.ENSP00000363260"/>
<dbReference type="CAZy" id="GT76">
    <property type="family name" value="Glycosyltransferase Family 76"/>
</dbReference>
<dbReference type="iPTMnet" id="Q9NUD9"/>
<dbReference type="PhosphoSitePlus" id="Q9NUD9"/>
<dbReference type="BioMuta" id="PIGV"/>
<dbReference type="DMDM" id="74752975"/>
<dbReference type="MassIVE" id="Q9NUD9"/>
<dbReference type="PaxDb" id="9606-ENSP00000363260"/>
<dbReference type="PeptideAtlas" id="Q9NUD9"/>
<dbReference type="Antibodypedia" id="30687">
    <property type="antibodies" value="101 antibodies from 17 providers"/>
</dbReference>
<dbReference type="DNASU" id="55650"/>
<dbReference type="Ensembl" id="ENST00000078527.9">
    <property type="protein sequence ID" value="ENSP00000078527.4"/>
    <property type="gene ID" value="ENSG00000060642.12"/>
</dbReference>
<dbReference type="Ensembl" id="ENST00000374145.6">
    <property type="protein sequence ID" value="ENSP00000363260.1"/>
    <property type="gene ID" value="ENSG00000060642.12"/>
</dbReference>
<dbReference type="Ensembl" id="ENST00000455364.2">
    <property type="protein sequence ID" value="ENSP00000406080.2"/>
    <property type="gene ID" value="ENSG00000060642.12"/>
</dbReference>
<dbReference type="Ensembl" id="ENST00000674202.1">
    <property type="protein sequence ID" value="ENSP00000501479.1"/>
    <property type="gene ID" value="ENSG00000060642.12"/>
</dbReference>
<dbReference type="Ensembl" id="ENST00000674222.1">
    <property type="protein sequence ID" value="ENSP00000501335.1"/>
    <property type="gene ID" value="ENSG00000060642.12"/>
</dbReference>
<dbReference type="Ensembl" id="ENST00000674273.1">
    <property type="protein sequence ID" value="ENSP00000501527.1"/>
    <property type="gene ID" value="ENSG00000060642.12"/>
</dbReference>
<dbReference type="Ensembl" id="ENST00000688522.1">
    <property type="protein sequence ID" value="ENSP00000508665.1"/>
    <property type="gene ID" value="ENSG00000060642.12"/>
</dbReference>
<dbReference type="Ensembl" id="ENST00000691135.1">
    <property type="protein sequence ID" value="ENSP00000510357.1"/>
    <property type="gene ID" value="ENSG00000060642.12"/>
</dbReference>
<dbReference type="GeneID" id="55650"/>
<dbReference type="KEGG" id="hsa:55650"/>
<dbReference type="MANE-Select" id="ENST00000674202.1">
    <property type="protein sequence ID" value="ENSP00000501479.1"/>
    <property type="RefSeq nucleotide sequence ID" value="NM_017837.4"/>
    <property type="RefSeq protein sequence ID" value="NP_060307.2"/>
</dbReference>
<dbReference type="UCSC" id="uc001bmz.4">
    <property type="organism name" value="human"/>
</dbReference>
<dbReference type="AGR" id="HGNC:26031"/>
<dbReference type="CTD" id="55650"/>
<dbReference type="DisGeNET" id="55650"/>
<dbReference type="GeneCards" id="PIGV"/>
<dbReference type="HGNC" id="HGNC:26031">
    <property type="gene designation" value="PIGV"/>
</dbReference>
<dbReference type="HPA" id="ENSG00000060642">
    <property type="expression patterns" value="Low tissue specificity"/>
</dbReference>
<dbReference type="MalaCards" id="PIGV"/>
<dbReference type="MIM" id="239300">
    <property type="type" value="phenotype"/>
</dbReference>
<dbReference type="MIM" id="610274">
    <property type="type" value="gene"/>
</dbReference>
<dbReference type="neXtProt" id="NX_Q9NUD9"/>
<dbReference type="OpenTargets" id="ENSG00000060642"/>
<dbReference type="Orphanet" id="247262">
    <property type="disease" value="Hyperphosphatasia-intellectual disability syndrome"/>
</dbReference>
<dbReference type="PharmGKB" id="PA134952230"/>
<dbReference type="VEuPathDB" id="HostDB:ENSG00000060642"/>
<dbReference type="eggNOG" id="KOG2647">
    <property type="taxonomic scope" value="Eukaryota"/>
</dbReference>
<dbReference type="GeneTree" id="ENSGT00390000013174"/>
<dbReference type="HOGENOM" id="CLU_029048_3_2_1"/>
<dbReference type="InParanoid" id="Q9NUD9"/>
<dbReference type="OMA" id="GALFIWC"/>
<dbReference type="OrthoDB" id="10252502at2759"/>
<dbReference type="PAN-GO" id="Q9NUD9">
    <property type="GO annotations" value="4 GO annotations based on evolutionary models"/>
</dbReference>
<dbReference type="PhylomeDB" id="Q9NUD9"/>
<dbReference type="TreeFam" id="TF314515"/>
<dbReference type="PathwayCommons" id="Q9NUD9"/>
<dbReference type="Reactome" id="R-HSA-162710">
    <property type="pathway name" value="Synthesis of glycosylphosphatidylinositol (GPI)"/>
</dbReference>
<dbReference type="SignaLink" id="Q9NUD9"/>
<dbReference type="UniPathway" id="UPA00196"/>
<dbReference type="BioGRID-ORCS" id="55650">
    <property type="hits" value="39 hits in 1162 CRISPR screens"/>
</dbReference>
<dbReference type="ChiTaRS" id="PIGV">
    <property type="organism name" value="human"/>
</dbReference>
<dbReference type="GeneWiki" id="PIGV"/>
<dbReference type="GenomeRNAi" id="55650"/>
<dbReference type="Pharos" id="Q9NUD9">
    <property type="development level" value="Tbio"/>
</dbReference>
<dbReference type="PRO" id="PR:Q9NUD9"/>
<dbReference type="Proteomes" id="UP000005640">
    <property type="component" value="Chromosome 1"/>
</dbReference>
<dbReference type="RNAct" id="Q9NUD9">
    <property type="molecule type" value="protein"/>
</dbReference>
<dbReference type="Bgee" id="ENSG00000060642">
    <property type="expression patterns" value="Expressed in sperm and 198 other cell types or tissues"/>
</dbReference>
<dbReference type="ExpressionAtlas" id="Q9NUD9">
    <property type="expression patterns" value="baseline and differential"/>
</dbReference>
<dbReference type="GO" id="GO:0005789">
    <property type="term" value="C:endoplasmic reticulum membrane"/>
    <property type="evidence" value="ECO:0000314"/>
    <property type="project" value="UniProtKB"/>
</dbReference>
<dbReference type="GO" id="GO:0031501">
    <property type="term" value="C:mannosyltransferase complex"/>
    <property type="evidence" value="ECO:0000318"/>
    <property type="project" value="GO_Central"/>
</dbReference>
<dbReference type="GO" id="GO:0000009">
    <property type="term" value="F:alpha-1,6-mannosyltransferase activity"/>
    <property type="evidence" value="ECO:0000315"/>
    <property type="project" value="UniProtKB"/>
</dbReference>
<dbReference type="GO" id="GO:0004376">
    <property type="term" value="F:glycolipid mannosyltransferase activity"/>
    <property type="evidence" value="ECO:0000304"/>
    <property type="project" value="Reactome"/>
</dbReference>
<dbReference type="GO" id="GO:0000030">
    <property type="term" value="F:mannosyltransferase activity"/>
    <property type="evidence" value="ECO:0000318"/>
    <property type="project" value="GO_Central"/>
</dbReference>
<dbReference type="GO" id="GO:0006506">
    <property type="term" value="P:GPI anchor biosynthetic process"/>
    <property type="evidence" value="ECO:0000315"/>
    <property type="project" value="UniProtKB"/>
</dbReference>
<dbReference type="InterPro" id="IPR007315">
    <property type="entry name" value="PIG-V/Gpi18"/>
</dbReference>
<dbReference type="PANTHER" id="PTHR12468">
    <property type="entry name" value="GPI MANNOSYLTRANSFERASE 2"/>
    <property type="match status" value="1"/>
</dbReference>
<dbReference type="PANTHER" id="PTHR12468:SF2">
    <property type="entry name" value="GPI MANNOSYLTRANSFERASE 2"/>
    <property type="match status" value="1"/>
</dbReference>
<dbReference type="Pfam" id="PF04188">
    <property type="entry name" value="Mannosyl_trans2"/>
    <property type="match status" value="1"/>
</dbReference>
<reference key="1">
    <citation type="journal article" date="2004" name="Nat. Genet.">
        <title>Complete sequencing and characterization of 21,243 full-length human cDNAs.</title>
        <authorList>
            <person name="Ota T."/>
            <person name="Suzuki Y."/>
            <person name="Nishikawa T."/>
            <person name="Otsuki T."/>
            <person name="Sugiyama T."/>
            <person name="Irie R."/>
            <person name="Wakamatsu A."/>
            <person name="Hayashi K."/>
            <person name="Sato H."/>
            <person name="Nagai K."/>
            <person name="Kimura K."/>
            <person name="Makita H."/>
            <person name="Sekine M."/>
            <person name="Obayashi M."/>
            <person name="Nishi T."/>
            <person name="Shibahara T."/>
            <person name="Tanaka T."/>
            <person name="Ishii S."/>
            <person name="Yamamoto J."/>
            <person name="Saito K."/>
            <person name="Kawai Y."/>
            <person name="Isono Y."/>
            <person name="Nakamura Y."/>
            <person name="Nagahari K."/>
            <person name="Murakami K."/>
            <person name="Yasuda T."/>
            <person name="Iwayanagi T."/>
            <person name="Wagatsuma M."/>
            <person name="Shiratori A."/>
            <person name="Sudo H."/>
            <person name="Hosoiri T."/>
            <person name="Kaku Y."/>
            <person name="Kodaira H."/>
            <person name="Kondo H."/>
            <person name="Sugawara M."/>
            <person name="Takahashi M."/>
            <person name="Kanda K."/>
            <person name="Yokoi T."/>
            <person name="Furuya T."/>
            <person name="Kikkawa E."/>
            <person name="Omura Y."/>
            <person name="Abe K."/>
            <person name="Kamihara K."/>
            <person name="Katsuta N."/>
            <person name="Sato K."/>
            <person name="Tanikawa M."/>
            <person name="Yamazaki M."/>
            <person name="Ninomiya K."/>
            <person name="Ishibashi T."/>
            <person name="Yamashita H."/>
            <person name="Murakawa K."/>
            <person name="Fujimori K."/>
            <person name="Tanai H."/>
            <person name="Kimata M."/>
            <person name="Watanabe M."/>
            <person name="Hiraoka S."/>
            <person name="Chiba Y."/>
            <person name="Ishida S."/>
            <person name="Ono Y."/>
            <person name="Takiguchi S."/>
            <person name="Watanabe S."/>
            <person name="Yosida M."/>
            <person name="Hotuta T."/>
            <person name="Kusano J."/>
            <person name="Kanehori K."/>
            <person name="Takahashi-Fujii A."/>
            <person name="Hara H."/>
            <person name="Tanase T.-O."/>
            <person name="Nomura Y."/>
            <person name="Togiya S."/>
            <person name="Komai F."/>
            <person name="Hara R."/>
            <person name="Takeuchi K."/>
            <person name="Arita M."/>
            <person name="Imose N."/>
            <person name="Musashino K."/>
            <person name="Yuuki H."/>
            <person name="Oshima A."/>
            <person name="Sasaki N."/>
            <person name="Aotsuka S."/>
            <person name="Yoshikawa Y."/>
            <person name="Matsunawa H."/>
            <person name="Ichihara T."/>
            <person name="Shiohata N."/>
            <person name="Sano S."/>
            <person name="Moriya S."/>
            <person name="Momiyama H."/>
            <person name="Satoh N."/>
            <person name="Takami S."/>
            <person name="Terashima Y."/>
            <person name="Suzuki O."/>
            <person name="Nakagawa S."/>
            <person name="Senoh A."/>
            <person name="Mizoguchi H."/>
            <person name="Goto Y."/>
            <person name="Shimizu F."/>
            <person name="Wakebe H."/>
            <person name="Hishigaki H."/>
            <person name="Watanabe T."/>
            <person name="Sugiyama A."/>
            <person name="Takemoto M."/>
            <person name="Kawakami B."/>
            <person name="Yamazaki M."/>
            <person name="Watanabe K."/>
            <person name="Kumagai A."/>
            <person name="Itakura S."/>
            <person name="Fukuzumi Y."/>
            <person name="Fujimori Y."/>
            <person name="Komiyama M."/>
            <person name="Tashiro H."/>
            <person name="Tanigami A."/>
            <person name="Fujiwara T."/>
            <person name="Ono T."/>
            <person name="Yamada K."/>
            <person name="Fujii Y."/>
            <person name="Ozaki K."/>
            <person name="Hirao M."/>
            <person name="Ohmori Y."/>
            <person name="Kawabata A."/>
            <person name="Hikiji T."/>
            <person name="Kobatake N."/>
            <person name="Inagaki H."/>
            <person name="Ikema Y."/>
            <person name="Okamoto S."/>
            <person name="Okitani R."/>
            <person name="Kawakami T."/>
            <person name="Noguchi S."/>
            <person name="Itoh T."/>
            <person name="Shigeta K."/>
            <person name="Senba T."/>
            <person name="Matsumura K."/>
            <person name="Nakajima Y."/>
            <person name="Mizuno T."/>
            <person name="Morinaga M."/>
            <person name="Sasaki M."/>
            <person name="Togashi T."/>
            <person name="Oyama M."/>
            <person name="Hata H."/>
            <person name="Watanabe M."/>
            <person name="Komatsu T."/>
            <person name="Mizushima-Sugano J."/>
            <person name="Satoh T."/>
            <person name="Shirai Y."/>
            <person name="Takahashi Y."/>
            <person name="Nakagawa K."/>
            <person name="Okumura K."/>
            <person name="Nagase T."/>
            <person name="Nomura N."/>
            <person name="Kikuchi H."/>
            <person name="Masuho Y."/>
            <person name="Yamashita R."/>
            <person name="Nakai K."/>
            <person name="Yada T."/>
            <person name="Nakamura Y."/>
            <person name="Ohara O."/>
            <person name="Isogai T."/>
            <person name="Sugano S."/>
        </authorList>
    </citation>
    <scope>NUCLEOTIDE SEQUENCE [LARGE SCALE MRNA]</scope>
</reference>
<reference key="2">
    <citation type="journal article" date="2006" name="Nature">
        <title>The DNA sequence and biological annotation of human chromosome 1.</title>
        <authorList>
            <person name="Gregory S.G."/>
            <person name="Barlow K.F."/>
            <person name="McLay K.E."/>
            <person name="Kaul R."/>
            <person name="Swarbreck D."/>
            <person name="Dunham A."/>
            <person name="Scott C.E."/>
            <person name="Howe K.L."/>
            <person name="Woodfine K."/>
            <person name="Spencer C.C.A."/>
            <person name="Jones M.C."/>
            <person name="Gillson C."/>
            <person name="Searle S."/>
            <person name="Zhou Y."/>
            <person name="Kokocinski F."/>
            <person name="McDonald L."/>
            <person name="Evans R."/>
            <person name="Phillips K."/>
            <person name="Atkinson A."/>
            <person name="Cooper R."/>
            <person name="Jones C."/>
            <person name="Hall R.E."/>
            <person name="Andrews T.D."/>
            <person name="Lloyd C."/>
            <person name="Ainscough R."/>
            <person name="Almeida J.P."/>
            <person name="Ambrose K.D."/>
            <person name="Anderson F."/>
            <person name="Andrew R.W."/>
            <person name="Ashwell R.I.S."/>
            <person name="Aubin K."/>
            <person name="Babbage A.K."/>
            <person name="Bagguley C.L."/>
            <person name="Bailey J."/>
            <person name="Beasley H."/>
            <person name="Bethel G."/>
            <person name="Bird C.P."/>
            <person name="Bray-Allen S."/>
            <person name="Brown J.Y."/>
            <person name="Brown A.J."/>
            <person name="Buckley D."/>
            <person name="Burton J."/>
            <person name="Bye J."/>
            <person name="Carder C."/>
            <person name="Chapman J.C."/>
            <person name="Clark S.Y."/>
            <person name="Clarke G."/>
            <person name="Clee C."/>
            <person name="Cobley V."/>
            <person name="Collier R.E."/>
            <person name="Corby N."/>
            <person name="Coville G.J."/>
            <person name="Davies J."/>
            <person name="Deadman R."/>
            <person name="Dunn M."/>
            <person name="Earthrowl M."/>
            <person name="Ellington A.G."/>
            <person name="Errington H."/>
            <person name="Frankish A."/>
            <person name="Frankland J."/>
            <person name="French L."/>
            <person name="Garner P."/>
            <person name="Garnett J."/>
            <person name="Gay L."/>
            <person name="Ghori M.R.J."/>
            <person name="Gibson R."/>
            <person name="Gilby L.M."/>
            <person name="Gillett W."/>
            <person name="Glithero R.J."/>
            <person name="Grafham D.V."/>
            <person name="Griffiths C."/>
            <person name="Griffiths-Jones S."/>
            <person name="Grocock R."/>
            <person name="Hammond S."/>
            <person name="Harrison E.S.I."/>
            <person name="Hart E."/>
            <person name="Haugen E."/>
            <person name="Heath P.D."/>
            <person name="Holmes S."/>
            <person name="Holt K."/>
            <person name="Howden P.J."/>
            <person name="Hunt A.R."/>
            <person name="Hunt S.E."/>
            <person name="Hunter G."/>
            <person name="Isherwood J."/>
            <person name="James R."/>
            <person name="Johnson C."/>
            <person name="Johnson D."/>
            <person name="Joy A."/>
            <person name="Kay M."/>
            <person name="Kershaw J.K."/>
            <person name="Kibukawa M."/>
            <person name="Kimberley A.M."/>
            <person name="King A."/>
            <person name="Knights A.J."/>
            <person name="Lad H."/>
            <person name="Laird G."/>
            <person name="Lawlor S."/>
            <person name="Leongamornlert D.A."/>
            <person name="Lloyd D.M."/>
            <person name="Loveland J."/>
            <person name="Lovell J."/>
            <person name="Lush M.J."/>
            <person name="Lyne R."/>
            <person name="Martin S."/>
            <person name="Mashreghi-Mohammadi M."/>
            <person name="Matthews L."/>
            <person name="Matthews N.S.W."/>
            <person name="McLaren S."/>
            <person name="Milne S."/>
            <person name="Mistry S."/>
            <person name="Moore M.J.F."/>
            <person name="Nickerson T."/>
            <person name="O'Dell C.N."/>
            <person name="Oliver K."/>
            <person name="Palmeiri A."/>
            <person name="Palmer S.A."/>
            <person name="Parker A."/>
            <person name="Patel D."/>
            <person name="Pearce A.V."/>
            <person name="Peck A.I."/>
            <person name="Pelan S."/>
            <person name="Phelps K."/>
            <person name="Phillimore B.J."/>
            <person name="Plumb R."/>
            <person name="Rajan J."/>
            <person name="Raymond C."/>
            <person name="Rouse G."/>
            <person name="Saenphimmachak C."/>
            <person name="Sehra H.K."/>
            <person name="Sheridan E."/>
            <person name="Shownkeen R."/>
            <person name="Sims S."/>
            <person name="Skuce C.D."/>
            <person name="Smith M."/>
            <person name="Steward C."/>
            <person name="Subramanian S."/>
            <person name="Sycamore N."/>
            <person name="Tracey A."/>
            <person name="Tromans A."/>
            <person name="Van Helmond Z."/>
            <person name="Wall M."/>
            <person name="Wallis J.M."/>
            <person name="White S."/>
            <person name="Whitehead S.L."/>
            <person name="Wilkinson J.E."/>
            <person name="Willey D.L."/>
            <person name="Williams H."/>
            <person name="Wilming L."/>
            <person name="Wray P.W."/>
            <person name="Wu Z."/>
            <person name="Coulson A."/>
            <person name="Vaudin M."/>
            <person name="Sulston J.E."/>
            <person name="Durbin R.M."/>
            <person name="Hubbard T."/>
            <person name="Wooster R."/>
            <person name="Dunham I."/>
            <person name="Carter N.P."/>
            <person name="McVean G."/>
            <person name="Ross M.T."/>
            <person name="Harrow J."/>
            <person name="Olson M.V."/>
            <person name="Beck S."/>
            <person name="Rogers J."/>
            <person name="Bentley D.R."/>
        </authorList>
    </citation>
    <scope>NUCLEOTIDE SEQUENCE [LARGE SCALE GENOMIC DNA]</scope>
</reference>
<reference key="3">
    <citation type="submission" date="2005-09" db="EMBL/GenBank/DDBJ databases">
        <authorList>
            <person name="Mural R.J."/>
            <person name="Istrail S."/>
            <person name="Sutton G.G."/>
            <person name="Florea L."/>
            <person name="Halpern A.L."/>
            <person name="Mobarry C.M."/>
            <person name="Lippert R."/>
            <person name="Walenz B."/>
            <person name="Shatkay H."/>
            <person name="Dew I."/>
            <person name="Miller J.R."/>
            <person name="Flanigan M.J."/>
            <person name="Edwards N.J."/>
            <person name="Bolanos R."/>
            <person name="Fasulo D."/>
            <person name="Halldorsson B.V."/>
            <person name="Hannenhalli S."/>
            <person name="Turner R."/>
            <person name="Yooseph S."/>
            <person name="Lu F."/>
            <person name="Nusskern D.R."/>
            <person name="Shue B.C."/>
            <person name="Zheng X.H."/>
            <person name="Zhong F."/>
            <person name="Delcher A.L."/>
            <person name="Huson D.H."/>
            <person name="Kravitz S.A."/>
            <person name="Mouchard L."/>
            <person name="Reinert K."/>
            <person name="Remington K.A."/>
            <person name="Clark A.G."/>
            <person name="Waterman M.S."/>
            <person name="Eichler E.E."/>
            <person name="Adams M.D."/>
            <person name="Hunkapiller M.W."/>
            <person name="Myers E.W."/>
            <person name="Venter J.C."/>
        </authorList>
    </citation>
    <scope>NUCLEOTIDE SEQUENCE [LARGE SCALE GENOMIC DNA]</scope>
</reference>
<reference key="4">
    <citation type="journal article" date="2004" name="Genome Res.">
        <title>The status, quality, and expansion of the NIH full-length cDNA project: the Mammalian Gene Collection (MGC).</title>
        <authorList>
            <consortium name="The MGC Project Team"/>
        </authorList>
    </citation>
    <scope>NUCLEOTIDE SEQUENCE [LARGE SCALE MRNA]</scope>
    <source>
        <tissue>Lung</tissue>
    </source>
</reference>
<reference key="5">
    <citation type="journal article" date="2005" name="FEBS J.">
        <title>Saccharomyces cerevisiae Ybr004c and its human homologue are required for addition of the second mannose during glycosylphosphatidylinositol precursor assembly.</title>
        <authorList>
            <person name="Fabre A.-L."/>
            <person name="Orlean P."/>
            <person name="Taron C.H."/>
        </authorList>
    </citation>
    <scope>FUNCTION</scope>
</reference>
<reference key="6">
    <citation type="journal article" date="2005" name="J. Biol. Chem.">
        <title>PIG-V involved in transferring the second mannose in glycosylphosphatidylinositol.</title>
        <authorList>
            <person name="Kang J.Y."/>
            <person name="Hong Y."/>
            <person name="Ashida H."/>
            <person name="Shishioh N."/>
            <person name="Murakami Y."/>
            <person name="Morita Y.S."/>
            <person name="Maeda Y."/>
            <person name="Kinoshita T."/>
        </authorList>
    </citation>
    <scope>FUNCTION</scope>
    <scope>CATALYTIC ACTIVITY</scope>
    <scope>PATHWAY</scope>
    <scope>SUBCELLULAR LOCATION</scope>
    <scope>TOPOLOGY</scope>
    <scope>LACK OF GLYCOSYLATION</scope>
    <scope>MUTAGENESIS OF TRP-66; ASP-67; 293-PRO-PRO-294; GLN-308 AND TRP-312</scope>
</reference>
<reference key="7">
    <citation type="journal article" date="1970" name="J. Pediatr.">
        <title>Familial hyperphosphatase with mental retardation, seizures, and neurologic deficits.</title>
        <authorList>
            <person name="Mabry C.C."/>
            <person name="Bautista A."/>
            <person name="Kirk R.F."/>
            <person name="Dubilier L.D."/>
            <person name="Braunstein H."/>
            <person name="Koepke J.A."/>
        </authorList>
    </citation>
    <scope>DESCRIPTION OF HYPERPHOSPHATASIA WITH MENTAL RETARDATION SYNDROME</scope>
</reference>
<reference key="8">
    <citation type="journal article" date="2010" name="Nat. Genet.">
        <title>Identity-by-descent filtering of exome sequence data identifies PIGV mutations in hyperphosphatasia mental retardation syndrome.</title>
        <authorList>
            <person name="Krawitz P.M."/>
            <person name="Schweiger M.R."/>
            <person name="Rodelsperger C."/>
            <person name="Marcelis C."/>
            <person name="Kolsch U."/>
            <person name="Meisel C."/>
            <person name="Stephani F."/>
            <person name="Kinoshita T."/>
            <person name="Murakami Y."/>
            <person name="Bauer S."/>
            <person name="Isau M."/>
            <person name="Fischer A."/>
            <person name="Dahl A."/>
            <person name="Kerick M."/>
            <person name="Hecht J."/>
            <person name="Kohler S."/>
            <person name="Jager M."/>
            <person name="Grunhagen J."/>
            <person name="de Condor B.J."/>
            <person name="Doelken S."/>
            <person name="Brunner H.G."/>
            <person name="Meinecke P."/>
            <person name="Passarge E."/>
            <person name="Thompson M.D."/>
            <person name="Cole D.E."/>
            <person name="Horn D."/>
            <person name="Roscioli T."/>
            <person name="Mundlos S."/>
            <person name="Robinson P.N."/>
        </authorList>
    </citation>
    <scope>VARIANTS HPMRS1 LYS-256; VAL-341; GLU-341 AND PRO-385</scope>
    <scope>INVOLVEMENT IN HPMRS1</scope>
</reference>